<keyword id="KW-0472">Membrane</keyword>
<keyword id="KW-1185">Reference proteome</keyword>
<keyword id="KW-0812">Transmembrane</keyword>
<keyword id="KW-1133">Transmembrane helix</keyword>
<dbReference type="EMBL" id="Z68114">
    <property type="protein sequence ID" value="CAA92162.1"/>
    <property type="molecule type" value="Genomic_DNA"/>
</dbReference>
<dbReference type="PIR" id="T21046">
    <property type="entry name" value="T21046"/>
</dbReference>
<dbReference type="RefSeq" id="NP_510066.1">
    <property type="nucleotide sequence ID" value="NM_077665.1"/>
</dbReference>
<dbReference type="SMR" id="Q19507"/>
<dbReference type="FunCoup" id="Q19507">
    <property type="interactions" value="12"/>
</dbReference>
<dbReference type="PaxDb" id="6239-F17A2.11"/>
<dbReference type="EnsemblMetazoa" id="F17A2.11.1">
    <property type="protein sequence ID" value="F17A2.11.1"/>
    <property type="gene ID" value="WBGene00005125"/>
</dbReference>
<dbReference type="GeneID" id="184607"/>
<dbReference type="KEGG" id="cel:CELE_F17A2.11"/>
<dbReference type="UCSC" id="F17A2.11">
    <property type="organism name" value="c. elegans"/>
</dbReference>
<dbReference type="AGR" id="WB:WBGene00005125"/>
<dbReference type="CTD" id="184607"/>
<dbReference type="WormBase" id="F17A2.11">
    <property type="protein sequence ID" value="CE15864"/>
    <property type="gene ID" value="WBGene00005125"/>
    <property type="gene designation" value="srd-47"/>
</dbReference>
<dbReference type="eggNOG" id="ENOG502TDGT">
    <property type="taxonomic scope" value="Eukaryota"/>
</dbReference>
<dbReference type="GeneTree" id="ENSGT00970000196873"/>
<dbReference type="HOGENOM" id="CLU_057924_2_0_1"/>
<dbReference type="InParanoid" id="Q19507"/>
<dbReference type="OMA" id="PIEIWCY"/>
<dbReference type="OrthoDB" id="5863340at2759"/>
<dbReference type="PhylomeDB" id="Q19507"/>
<dbReference type="PRO" id="PR:Q19507"/>
<dbReference type="Proteomes" id="UP000001940">
    <property type="component" value="Chromosome X"/>
</dbReference>
<dbReference type="GO" id="GO:0016020">
    <property type="term" value="C:membrane"/>
    <property type="evidence" value="ECO:0007669"/>
    <property type="project" value="UniProtKB-SubCell"/>
</dbReference>
<dbReference type="InterPro" id="IPR019421">
    <property type="entry name" value="7TM_GPCR_serpentine_rcpt_Srd"/>
</dbReference>
<dbReference type="InterPro" id="IPR050920">
    <property type="entry name" value="Nematode_rcpt-like_delta"/>
</dbReference>
<dbReference type="PANTHER" id="PTHR22945:SF26">
    <property type="entry name" value="SERPENTINE RECEPTOR CLASS DELTA-45-RELATED"/>
    <property type="match status" value="1"/>
</dbReference>
<dbReference type="PANTHER" id="PTHR22945">
    <property type="entry name" value="SERPENTINE RECEPTOR, CLASS D DELTA"/>
    <property type="match status" value="1"/>
</dbReference>
<dbReference type="Pfam" id="PF10317">
    <property type="entry name" value="7TM_GPCR_Srd"/>
    <property type="match status" value="1"/>
</dbReference>
<gene>
    <name type="primary">srd-47</name>
    <name type="ORF">F17A2.11</name>
</gene>
<accession>Q19507</accession>
<name>SRD47_CAEEL</name>
<sequence>MYNIILSIFYPIFLALVFPTQIFLFVVVVKYSPKYMQTLRNVLFCNCIFQTISVVLLCLLQLRQVSHLKPMEIWCYGPLRHFEAIISYCLYFVSQSTSVVSNILVLLTIYLKYEAAKNVTNKQSNKCIVIILLLVPVFVLVGAEIYSVVTHSLLPEVRYLFEVINSNVTDHSVIGYITLQTVPSYLIISIVFGSVFLLPPMGLYTRRKIIFHINSGRDTTSQLKKHQRKTFINGLTLQACLPLVSLCPIFVCYVIVIGTKSELLFEQYCISVLVLLPTFFDPYITLYSVAPYRKQIGMWLGKAKTGPMIVISSIMNL</sequence>
<organism>
    <name type="scientific">Caenorhabditis elegans</name>
    <dbReference type="NCBI Taxonomy" id="6239"/>
    <lineage>
        <taxon>Eukaryota</taxon>
        <taxon>Metazoa</taxon>
        <taxon>Ecdysozoa</taxon>
        <taxon>Nematoda</taxon>
        <taxon>Chromadorea</taxon>
        <taxon>Rhabditida</taxon>
        <taxon>Rhabditina</taxon>
        <taxon>Rhabditomorpha</taxon>
        <taxon>Rhabditoidea</taxon>
        <taxon>Rhabditidae</taxon>
        <taxon>Peloderinae</taxon>
        <taxon>Caenorhabditis</taxon>
    </lineage>
</organism>
<feature type="chain" id="PRO_0000104527" description="Serpentine receptor class delta-47">
    <location>
        <begin position="1"/>
        <end position="317"/>
    </location>
</feature>
<feature type="transmembrane region" description="Helical" evidence="1">
    <location>
        <begin position="8"/>
        <end position="28"/>
    </location>
</feature>
<feature type="transmembrane region" description="Helical" evidence="1">
    <location>
        <begin position="42"/>
        <end position="62"/>
    </location>
</feature>
<feature type="transmembrane region" description="Helical" evidence="1">
    <location>
        <begin position="89"/>
        <end position="109"/>
    </location>
</feature>
<feature type="transmembrane region" description="Helical" evidence="1">
    <location>
        <begin position="128"/>
        <end position="148"/>
    </location>
</feature>
<feature type="transmembrane region" description="Helical" evidence="1">
    <location>
        <begin position="185"/>
        <end position="205"/>
    </location>
</feature>
<feature type="transmembrane region" description="Helical" evidence="1">
    <location>
        <begin position="239"/>
        <end position="259"/>
    </location>
</feature>
<feature type="transmembrane region" description="Helical" evidence="1">
    <location>
        <begin position="270"/>
        <end position="290"/>
    </location>
</feature>
<comment type="subcellular location">
    <subcellularLocation>
        <location evidence="2">Membrane</location>
        <topology evidence="2">Multi-pass membrane protein</topology>
    </subcellularLocation>
</comment>
<comment type="similarity">
    <text evidence="2">Belongs to the nematode receptor-like protein srd family.</text>
</comment>
<proteinExistence type="inferred from homology"/>
<protein>
    <recommendedName>
        <fullName>Serpentine receptor class delta-47</fullName>
        <shortName>Protein srd-47</shortName>
    </recommendedName>
</protein>
<evidence type="ECO:0000255" key="1"/>
<evidence type="ECO:0000305" key="2"/>
<reference key="1">
    <citation type="journal article" date="1998" name="Science">
        <title>Genome sequence of the nematode C. elegans: a platform for investigating biology.</title>
        <authorList>
            <consortium name="The C. elegans sequencing consortium"/>
        </authorList>
    </citation>
    <scope>NUCLEOTIDE SEQUENCE [LARGE SCALE GENOMIC DNA]</scope>
    <source>
        <strain>Bristol N2</strain>
    </source>
</reference>